<gene>
    <name evidence="1" type="primary">hisF</name>
    <name type="ordered locus">Ping_1647</name>
</gene>
<evidence type="ECO:0000255" key="1">
    <source>
        <dbReference type="HAMAP-Rule" id="MF_01013"/>
    </source>
</evidence>
<name>HIS6_PSYIN</name>
<feature type="chain" id="PRO_1000063124" description="Imidazole glycerol phosphate synthase subunit HisF">
    <location>
        <begin position="1"/>
        <end position="257"/>
    </location>
</feature>
<feature type="active site" evidence="1">
    <location>
        <position position="11"/>
    </location>
</feature>
<feature type="active site" evidence="1">
    <location>
        <position position="130"/>
    </location>
</feature>
<sequence>MLAKRIIPCLDVKDGQVVKGVQFRNHEIVGDIVPLAKRYAEEGADELVFYDITASSDARVVDKSWVSRVAEVIDIPFCVAGGIKTIDDARRILEFGADKVSINSPALADPSLINRLSEKFGVQCIVIGIDSYFDKETGLYQVKQFTGNEKATLTTKWNTFDWIKEVQSRGAGEIVLNVMNQDGVRCGYDIDQLTQARAVCNVPLIASGGAGEMVHFAEVFKQADVDGALAASVFHKQIINIGELKAYLKTQQVEIRL</sequence>
<reference key="1">
    <citation type="journal article" date="2008" name="BMC Genomics">
        <title>Genomics of an extreme psychrophile, Psychromonas ingrahamii.</title>
        <authorList>
            <person name="Riley M."/>
            <person name="Staley J.T."/>
            <person name="Danchin A."/>
            <person name="Wang T.Z."/>
            <person name="Brettin T.S."/>
            <person name="Hauser L.J."/>
            <person name="Land M.L."/>
            <person name="Thompson L.S."/>
        </authorList>
    </citation>
    <scope>NUCLEOTIDE SEQUENCE [LARGE SCALE GENOMIC DNA]</scope>
    <source>
        <strain>DSM 17664 / CCUG 51855 / 37</strain>
    </source>
</reference>
<accession>A1SVC5</accession>
<proteinExistence type="inferred from homology"/>
<dbReference type="EC" id="4.3.2.10" evidence="1"/>
<dbReference type="EMBL" id="CP000510">
    <property type="protein sequence ID" value="ABM03440.1"/>
    <property type="molecule type" value="Genomic_DNA"/>
</dbReference>
<dbReference type="RefSeq" id="WP_011770000.1">
    <property type="nucleotide sequence ID" value="NC_008709.1"/>
</dbReference>
<dbReference type="SMR" id="A1SVC5"/>
<dbReference type="STRING" id="357804.Ping_1647"/>
<dbReference type="KEGG" id="pin:Ping_1647"/>
<dbReference type="eggNOG" id="COG0107">
    <property type="taxonomic scope" value="Bacteria"/>
</dbReference>
<dbReference type="HOGENOM" id="CLU_048577_4_0_6"/>
<dbReference type="OrthoDB" id="9781903at2"/>
<dbReference type="UniPathway" id="UPA00031">
    <property type="reaction ID" value="UER00010"/>
</dbReference>
<dbReference type="Proteomes" id="UP000000639">
    <property type="component" value="Chromosome"/>
</dbReference>
<dbReference type="GO" id="GO:0005737">
    <property type="term" value="C:cytoplasm"/>
    <property type="evidence" value="ECO:0007669"/>
    <property type="project" value="UniProtKB-SubCell"/>
</dbReference>
<dbReference type="GO" id="GO:0000107">
    <property type="term" value="F:imidazoleglycerol-phosphate synthase activity"/>
    <property type="evidence" value="ECO:0007669"/>
    <property type="project" value="UniProtKB-UniRule"/>
</dbReference>
<dbReference type="GO" id="GO:0016829">
    <property type="term" value="F:lyase activity"/>
    <property type="evidence" value="ECO:0007669"/>
    <property type="project" value="UniProtKB-KW"/>
</dbReference>
<dbReference type="GO" id="GO:0000105">
    <property type="term" value="P:L-histidine biosynthetic process"/>
    <property type="evidence" value="ECO:0007669"/>
    <property type="project" value="UniProtKB-UniRule"/>
</dbReference>
<dbReference type="CDD" id="cd04731">
    <property type="entry name" value="HisF"/>
    <property type="match status" value="1"/>
</dbReference>
<dbReference type="FunFam" id="3.20.20.70:FF:000006">
    <property type="entry name" value="Imidazole glycerol phosphate synthase subunit HisF"/>
    <property type="match status" value="1"/>
</dbReference>
<dbReference type="Gene3D" id="3.20.20.70">
    <property type="entry name" value="Aldolase class I"/>
    <property type="match status" value="1"/>
</dbReference>
<dbReference type="HAMAP" id="MF_01013">
    <property type="entry name" value="HisF"/>
    <property type="match status" value="1"/>
</dbReference>
<dbReference type="InterPro" id="IPR013785">
    <property type="entry name" value="Aldolase_TIM"/>
</dbReference>
<dbReference type="InterPro" id="IPR006062">
    <property type="entry name" value="His_biosynth"/>
</dbReference>
<dbReference type="InterPro" id="IPR004651">
    <property type="entry name" value="HisF"/>
</dbReference>
<dbReference type="InterPro" id="IPR050064">
    <property type="entry name" value="IGPS_HisA/HisF"/>
</dbReference>
<dbReference type="InterPro" id="IPR011060">
    <property type="entry name" value="RibuloseP-bd_barrel"/>
</dbReference>
<dbReference type="NCBIfam" id="TIGR00735">
    <property type="entry name" value="hisF"/>
    <property type="match status" value="1"/>
</dbReference>
<dbReference type="PANTHER" id="PTHR21235:SF2">
    <property type="entry name" value="IMIDAZOLE GLYCEROL PHOSPHATE SYNTHASE HISHF"/>
    <property type="match status" value="1"/>
</dbReference>
<dbReference type="PANTHER" id="PTHR21235">
    <property type="entry name" value="IMIDAZOLE GLYCEROL PHOSPHATE SYNTHASE SUBUNIT HISF/H IGP SYNTHASE SUBUNIT HISF/H"/>
    <property type="match status" value="1"/>
</dbReference>
<dbReference type="Pfam" id="PF00977">
    <property type="entry name" value="His_biosynth"/>
    <property type="match status" value="1"/>
</dbReference>
<dbReference type="SUPFAM" id="SSF51366">
    <property type="entry name" value="Ribulose-phoshate binding barrel"/>
    <property type="match status" value="1"/>
</dbReference>
<comment type="function">
    <text evidence="1">IGPS catalyzes the conversion of PRFAR and glutamine to IGP, AICAR and glutamate. The HisF subunit catalyzes the cyclization activity that produces IGP and AICAR from PRFAR using the ammonia provided by the HisH subunit.</text>
</comment>
<comment type="catalytic activity">
    <reaction evidence="1">
        <text>5-[(5-phospho-1-deoxy-D-ribulos-1-ylimino)methylamino]-1-(5-phospho-beta-D-ribosyl)imidazole-4-carboxamide + L-glutamine = D-erythro-1-(imidazol-4-yl)glycerol 3-phosphate + 5-amino-1-(5-phospho-beta-D-ribosyl)imidazole-4-carboxamide + L-glutamate + H(+)</text>
        <dbReference type="Rhea" id="RHEA:24793"/>
        <dbReference type="ChEBI" id="CHEBI:15378"/>
        <dbReference type="ChEBI" id="CHEBI:29985"/>
        <dbReference type="ChEBI" id="CHEBI:58278"/>
        <dbReference type="ChEBI" id="CHEBI:58359"/>
        <dbReference type="ChEBI" id="CHEBI:58475"/>
        <dbReference type="ChEBI" id="CHEBI:58525"/>
        <dbReference type="EC" id="4.3.2.10"/>
    </reaction>
</comment>
<comment type="pathway">
    <text evidence="1">Amino-acid biosynthesis; L-histidine biosynthesis; L-histidine from 5-phospho-alpha-D-ribose 1-diphosphate: step 5/9.</text>
</comment>
<comment type="subunit">
    <text evidence="1">Heterodimer of HisH and HisF.</text>
</comment>
<comment type="subcellular location">
    <subcellularLocation>
        <location evidence="1">Cytoplasm</location>
    </subcellularLocation>
</comment>
<comment type="similarity">
    <text evidence="1">Belongs to the HisA/HisF family.</text>
</comment>
<organism>
    <name type="scientific">Psychromonas ingrahamii (strain DSM 17664 / CCUG 51855 / 37)</name>
    <dbReference type="NCBI Taxonomy" id="357804"/>
    <lineage>
        <taxon>Bacteria</taxon>
        <taxon>Pseudomonadati</taxon>
        <taxon>Pseudomonadota</taxon>
        <taxon>Gammaproteobacteria</taxon>
        <taxon>Alteromonadales</taxon>
        <taxon>Psychromonadaceae</taxon>
        <taxon>Psychromonas</taxon>
    </lineage>
</organism>
<protein>
    <recommendedName>
        <fullName evidence="1">Imidazole glycerol phosphate synthase subunit HisF</fullName>
        <ecNumber evidence="1">4.3.2.10</ecNumber>
    </recommendedName>
    <alternativeName>
        <fullName evidence="1">IGP synthase cyclase subunit</fullName>
    </alternativeName>
    <alternativeName>
        <fullName evidence="1">IGP synthase subunit HisF</fullName>
    </alternativeName>
    <alternativeName>
        <fullName evidence="1">ImGP synthase subunit HisF</fullName>
        <shortName evidence="1">IGPS subunit HisF</shortName>
    </alternativeName>
</protein>
<keyword id="KW-0028">Amino-acid biosynthesis</keyword>
<keyword id="KW-0963">Cytoplasm</keyword>
<keyword id="KW-0368">Histidine biosynthesis</keyword>
<keyword id="KW-0456">Lyase</keyword>
<keyword id="KW-1185">Reference proteome</keyword>